<sequence>MEMKQISETTLKIMITMEDLEEHGMELKDFLIPQEKTEEFFYTVMDELDLPDNFKNSGMLSFRVTPRKDRVDVFVTKSDLKEDLDFNDLSDMEDYSGLSPEEFLKALEDNFMDKGDIEAHHKLEEHDKTLKEVDETMTEPAKEVAEETIREDYTHYVLAFSDFDQVVTFAQGLKNVSVEGSEFYKLGDVYYMTILLYLADEPDYYANNMYARFLEYANVADRTRPYLQEHATILMEEDALPVLQATKWS</sequence>
<feature type="chain" id="PRO_1000065355" description="Adapter protein MecA">
    <location>
        <begin position="1"/>
        <end position="249"/>
    </location>
</feature>
<dbReference type="EMBL" id="CP000419">
    <property type="protein sequence ID" value="ABJ65537.1"/>
    <property type="molecule type" value="Genomic_DNA"/>
</dbReference>
<dbReference type="RefSeq" id="WP_011680667.1">
    <property type="nucleotide sequence ID" value="NC_008532.1"/>
</dbReference>
<dbReference type="SMR" id="Q03MN5"/>
<dbReference type="KEGG" id="ste:STER_0216"/>
<dbReference type="HOGENOM" id="CLU_071496_1_0_9"/>
<dbReference type="GO" id="GO:0030674">
    <property type="term" value="F:protein-macromolecule adaptor activity"/>
    <property type="evidence" value="ECO:0007669"/>
    <property type="project" value="UniProtKB-UniRule"/>
</dbReference>
<dbReference type="FunFam" id="3.30.70.1950:FF:000003">
    <property type="entry name" value="Adapter protein MecA"/>
    <property type="match status" value="1"/>
</dbReference>
<dbReference type="Gene3D" id="3.30.70.1950">
    <property type="match status" value="1"/>
</dbReference>
<dbReference type="HAMAP" id="MF_01124">
    <property type="entry name" value="MecA"/>
    <property type="match status" value="1"/>
</dbReference>
<dbReference type="InterPro" id="IPR038471">
    <property type="entry name" value="MecA_C_sf"/>
</dbReference>
<dbReference type="InterPro" id="IPR008681">
    <property type="entry name" value="Neg-reg_MecA"/>
</dbReference>
<dbReference type="NCBIfam" id="NF002643">
    <property type="entry name" value="PRK02315.1-4"/>
    <property type="match status" value="1"/>
</dbReference>
<dbReference type="PANTHER" id="PTHR39161">
    <property type="entry name" value="ADAPTER PROTEIN MECA"/>
    <property type="match status" value="1"/>
</dbReference>
<dbReference type="PANTHER" id="PTHR39161:SF1">
    <property type="entry name" value="ADAPTER PROTEIN MECA 1"/>
    <property type="match status" value="1"/>
</dbReference>
<dbReference type="Pfam" id="PF05389">
    <property type="entry name" value="MecA"/>
    <property type="match status" value="1"/>
</dbReference>
<dbReference type="PIRSF" id="PIRSF029008">
    <property type="entry name" value="MecA"/>
    <property type="match status" value="1"/>
</dbReference>
<accession>Q03MN5</accession>
<organism>
    <name type="scientific">Streptococcus thermophilus (strain ATCC BAA-491 / LMD-9)</name>
    <dbReference type="NCBI Taxonomy" id="322159"/>
    <lineage>
        <taxon>Bacteria</taxon>
        <taxon>Bacillati</taxon>
        <taxon>Bacillota</taxon>
        <taxon>Bacilli</taxon>
        <taxon>Lactobacillales</taxon>
        <taxon>Streptococcaceae</taxon>
        <taxon>Streptococcus</taxon>
    </lineage>
</organism>
<protein>
    <recommendedName>
        <fullName evidence="1">Adapter protein MecA</fullName>
    </recommendedName>
</protein>
<reference key="1">
    <citation type="journal article" date="2006" name="Proc. Natl. Acad. Sci. U.S.A.">
        <title>Comparative genomics of the lactic acid bacteria.</title>
        <authorList>
            <person name="Makarova K.S."/>
            <person name="Slesarev A."/>
            <person name="Wolf Y.I."/>
            <person name="Sorokin A."/>
            <person name="Mirkin B."/>
            <person name="Koonin E.V."/>
            <person name="Pavlov A."/>
            <person name="Pavlova N."/>
            <person name="Karamychev V."/>
            <person name="Polouchine N."/>
            <person name="Shakhova V."/>
            <person name="Grigoriev I."/>
            <person name="Lou Y."/>
            <person name="Rohksar D."/>
            <person name="Lucas S."/>
            <person name="Huang K."/>
            <person name="Goodstein D.M."/>
            <person name="Hawkins T."/>
            <person name="Plengvidhya V."/>
            <person name="Welker D."/>
            <person name="Hughes J."/>
            <person name="Goh Y."/>
            <person name="Benson A."/>
            <person name="Baldwin K."/>
            <person name="Lee J.-H."/>
            <person name="Diaz-Muniz I."/>
            <person name="Dosti B."/>
            <person name="Smeianov V."/>
            <person name="Wechter W."/>
            <person name="Barabote R."/>
            <person name="Lorca G."/>
            <person name="Altermann E."/>
            <person name="Barrangou R."/>
            <person name="Ganesan B."/>
            <person name="Xie Y."/>
            <person name="Rawsthorne H."/>
            <person name="Tamir D."/>
            <person name="Parker C."/>
            <person name="Breidt F."/>
            <person name="Broadbent J.R."/>
            <person name="Hutkins R."/>
            <person name="O'Sullivan D."/>
            <person name="Steele J."/>
            <person name="Unlu G."/>
            <person name="Saier M.H. Jr."/>
            <person name="Klaenhammer T."/>
            <person name="Richardson P."/>
            <person name="Kozyavkin S."/>
            <person name="Weimer B.C."/>
            <person name="Mills D.A."/>
        </authorList>
    </citation>
    <scope>NUCLEOTIDE SEQUENCE [LARGE SCALE GENOMIC DNA]</scope>
    <source>
        <strain>ATCC BAA-491 / LMD-9</strain>
    </source>
</reference>
<comment type="function">
    <text evidence="1">Enables the recognition and targeting of unfolded and aggregated proteins to the ClpC protease or to other proteins involved in proteolysis.</text>
</comment>
<comment type="subunit">
    <text evidence="1">Homodimer.</text>
</comment>
<comment type="domain">
    <text>The N-terminal domain probably binds unfolded/aggregated proteins; the C-terminal domain interacts with ClpC.</text>
</comment>
<comment type="similarity">
    <text evidence="1">Belongs to the MecA family.</text>
</comment>
<gene>
    <name evidence="1" type="primary">mecA</name>
    <name type="ordered locus">STER_0216</name>
</gene>
<name>MECA_STRTD</name>
<evidence type="ECO:0000255" key="1">
    <source>
        <dbReference type="HAMAP-Rule" id="MF_01124"/>
    </source>
</evidence>
<proteinExistence type="inferred from homology"/>